<feature type="chain" id="PRO_1000186846" description="UPF0509 protein YciZ">
    <location>
        <begin position="1"/>
        <end position="57"/>
    </location>
</feature>
<accession>B5YZR7</accession>
<reference key="1">
    <citation type="journal article" date="2011" name="Proc. Natl. Acad. Sci. U.S.A.">
        <title>Genomic anatomy of Escherichia coli O157:H7 outbreaks.</title>
        <authorList>
            <person name="Eppinger M."/>
            <person name="Mammel M.K."/>
            <person name="Leclerc J.E."/>
            <person name="Ravel J."/>
            <person name="Cebula T.A."/>
        </authorList>
    </citation>
    <scope>NUCLEOTIDE SEQUENCE [LARGE SCALE GENOMIC DNA]</scope>
    <source>
        <strain>EC4115 / EHEC</strain>
    </source>
</reference>
<protein>
    <recommendedName>
        <fullName evidence="1">UPF0509 protein YciZ</fullName>
    </recommendedName>
</protein>
<gene>
    <name evidence="1" type="primary">yciZ</name>
    <name type="ordered locus">ECH74115_1920</name>
</gene>
<comment type="similarity">
    <text evidence="1">Belongs to the UPF0509 family.</text>
</comment>
<evidence type="ECO:0000255" key="1">
    <source>
        <dbReference type="HAMAP-Rule" id="MF_01641"/>
    </source>
</evidence>
<dbReference type="EMBL" id="CP001164">
    <property type="protein sequence ID" value="ACI35063.1"/>
    <property type="molecule type" value="Genomic_DNA"/>
</dbReference>
<dbReference type="RefSeq" id="WP_001288364.1">
    <property type="nucleotide sequence ID" value="NC_011353.1"/>
</dbReference>
<dbReference type="SMR" id="B5YZR7"/>
<dbReference type="KEGG" id="ecf:ECH74115_1920"/>
<dbReference type="HOGENOM" id="CLU_180697_1_0_6"/>
<dbReference type="HAMAP" id="MF_01641">
    <property type="entry name" value="UPF0509"/>
    <property type="match status" value="1"/>
</dbReference>
<dbReference type="InterPro" id="IPR020887">
    <property type="entry name" value="UPF0509"/>
</dbReference>
<dbReference type="NCBIfam" id="NF010179">
    <property type="entry name" value="PRK13658.1"/>
    <property type="match status" value="1"/>
</dbReference>
<dbReference type="Pfam" id="PF23675">
    <property type="entry name" value="YciZ"/>
    <property type="match status" value="1"/>
</dbReference>
<proteinExistence type="inferred from homology"/>
<name>YCIZ_ECO5E</name>
<organism>
    <name type="scientific">Escherichia coli O157:H7 (strain EC4115 / EHEC)</name>
    <dbReference type="NCBI Taxonomy" id="444450"/>
    <lineage>
        <taxon>Bacteria</taxon>
        <taxon>Pseudomonadati</taxon>
        <taxon>Pseudomonadota</taxon>
        <taxon>Gammaproteobacteria</taxon>
        <taxon>Enterobacterales</taxon>
        <taxon>Enterobacteriaceae</taxon>
        <taxon>Escherichia</taxon>
    </lineage>
</organism>
<sequence length="57" mass="6499">MSEFDAQRVAERIDIVLDILVADDYHSAIHNLEILKAELLRQVAESTPDIPKAPWEI</sequence>